<protein>
    <recommendedName>
        <fullName evidence="1">ATP synthase subunit alpha</fullName>
        <ecNumber evidence="1">7.1.2.2</ecNumber>
    </recommendedName>
    <alternativeName>
        <fullName evidence="1">ATP synthase F1 sector subunit alpha</fullName>
    </alternativeName>
    <alternativeName>
        <fullName evidence="1">F-ATPase subunit alpha</fullName>
    </alternativeName>
</protein>
<dbReference type="EC" id="7.1.2.2" evidence="1"/>
<dbReference type="EMBL" id="CP000730">
    <property type="protein sequence ID" value="ABX30092.1"/>
    <property type="molecule type" value="Genomic_DNA"/>
</dbReference>
<dbReference type="RefSeq" id="WP_000974881.1">
    <property type="nucleotide sequence ID" value="NC_010079.1"/>
</dbReference>
<dbReference type="SMR" id="A8YY72"/>
<dbReference type="KEGG" id="sax:USA300HOU_2095"/>
<dbReference type="HOGENOM" id="CLU_010091_2_1_9"/>
<dbReference type="GO" id="GO:0005886">
    <property type="term" value="C:plasma membrane"/>
    <property type="evidence" value="ECO:0007669"/>
    <property type="project" value="UniProtKB-SubCell"/>
</dbReference>
<dbReference type="GO" id="GO:0045259">
    <property type="term" value="C:proton-transporting ATP synthase complex"/>
    <property type="evidence" value="ECO:0007669"/>
    <property type="project" value="UniProtKB-KW"/>
</dbReference>
<dbReference type="GO" id="GO:0043531">
    <property type="term" value="F:ADP binding"/>
    <property type="evidence" value="ECO:0007669"/>
    <property type="project" value="TreeGrafter"/>
</dbReference>
<dbReference type="GO" id="GO:0005524">
    <property type="term" value="F:ATP binding"/>
    <property type="evidence" value="ECO:0007669"/>
    <property type="project" value="UniProtKB-UniRule"/>
</dbReference>
<dbReference type="GO" id="GO:0046933">
    <property type="term" value="F:proton-transporting ATP synthase activity, rotational mechanism"/>
    <property type="evidence" value="ECO:0007669"/>
    <property type="project" value="UniProtKB-UniRule"/>
</dbReference>
<dbReference type="CDD" id="cd18113">
    <property type="entry name" value="ATP-synt_F1_alpha_C"/>
    <property type="match status" value="1"/>
</dbReference>
<dbReference type="CDD" id="cd18116">
    <property type="entry name" value="ATP-synt_F1_alpha_N"/>
    <property type="match status" value="1"/>
</dbReference>
<dbReference type="CDD" id="cd01132">
    <property type="entry name" value="F1-ATPase_alpha_CD"/>
    <property type="match status" value="1"/>
</dbReference>
<dbReference type="FunFam" id="1.20.150.20:FF:000001">
    <property type="entry name" value="ATP synthase subunit alpha"/>
    <property type="match status" value="1"/>
</dbReference>
<dbReference type="FunFam" id="2.40.30.20:FF:000001">
    <property type="entry name" value="ATP synthase subunit alpha"/>
    <property type="match status" value="1"/>
</dbReference>
<dbReference type="FunFam" id="3.40.50.300:FF:000002">
    <property type="entry name" value="ATP synthase subunit alpha"/>
    <property type="match status" value="1"/>
</dbReference>
<dbReference type="Gene3D" id="2.40.30.20">
    <property type="match status" value="1"/>
</dbReference>
<dbReference type="Gene3D" id="1.20.150.20">
    <property type="entry name" value="ATP synthase alpha/beta chain, C-terminal domain"/>
    <property type="match status" value="1"/>
</dbReference>
<dbReference type="Gene3D" id="3.40.50.300">
    <property type="entry name" value="P-loop containing nucleotide triphosphate hydrolases"/>
    <property type="match status" value="1"/>
</dbReference>
<dbReference type="HAMAP" id="MF_01346">
    <property type="entry name" value="ATP_synth_alpha_bact"/>
    <property type="match status" value="1"/>
</dbReference>
<dbReference type="InterPro" id="IPR023366">
    <property type="entry name" value="ATP_synth_asu-like_sf"/>
</dbReference>
<dbReference type="InterPro" id="IPR000793">
    <property type="entry name" value="ATP_synth_asu_C"/>
</dbReference>
<dbReference type="InterPro" id="IPR038376">
    <property type="entry name" value="ATP_synth_asu_C_sf"/>
</dbReference>
<dbReference type="InterPro" id="IPR033732">
    <property type="entry name" value="ATP_synth_F1_a_nt-bd_dom"/>
</dbReference>
<dbReference type="InterPro" id="IPR005294">
    <property type="entry name" value="ATP_synth_F1_asu"/>
</dbReference>
<dbReference type="InterPro" id="IPR020003">
    <property type="entry name" value="ATPase_a/bsu_AS"/>
</dbReference>
<dbReference type="InterPro" id="IPR004100">
    <property type="entry name" value="ATPase_F1/V1/A1_a/bsu_N"/>
</dbReference>
<dbReference type="InterPro" id="IPR036121">
    <property type="entry name" value="ATPase_F1/V1/A1_a/bsu_N_sf"/>
</dbReference>
<dbReference type="InterPro" id="IPR000194">
    <property type="entry name" value="ATPase_F1/V1/A1_a/bsu_nucl-bd"/>
</dbReference>
<dbReference type="InterPro" id="IPR027417">
    <property type="entry name" value="P-loop_NTPase"/>
</dbReference>
<dbReference type="NCBIfam" id="TIGR00962">
    <property type="entry name" value="atpA"/>
    <property type="match status" value="1"/>
</dbReference>
<dbReference type="NCBIfam" id="NF009884">
    <property type="entry name" value="PRK13343.1"/>
    <property type="match status" value="1"/>
</dbReference>
<dbReference type="PANTHER" id="PTHR48082">
    <property type="entry name" value="ATP SYNTHASE SUBUNIT ALPHA, MITOCHONDRIAL"/>
    <property type="match status" value="1"/>
</dbReference>
<dbReference type="PANTHER" id="PTHR48082:SF2">
    <property type="entry name" value="ATP SYNTHASE SUBUNIT ALPHA, MITOCHONDRIAL"/>
    <property type="match status" value="1"/>
</dbReference>
<dbReference type="Pfam" id="PF00006">
    <property type="entry name" value="ATP-synt_ab"/>
    <property type="match status" value="1"/>
</dbReference>
<dbReference type="Pfam" id="PF00306">
    <property type="entry name" value="ATP-synt_ab_C"/>
    <property type="match status" value="1"/>
</dbReference>
<dbReference type="Pfam" id="PF02874">
    <property type="entry name" value="ATP-synt_ab_N"/>
    <property type="match status" value="1"/>
</dbReference>
<dbReference type="PIRSF" id="PIRSF039088">
    <property type="entry name" value="F_ATPase_subunit_alpha"/>
    <property type="match status" value="1"/>
</dbReference>
<dbReference type="SUPFAM" id="SSF47917">
    <property type="entry name" value="C-terminal domain of alpha and beta subunits of F1 ATP synthase"/>
    <property type="match status" value="1"/>
</dbReference>
<dbReference type="SUPFAM" id="SSF50615">
    <property type="entry name" value="N-terminal domain of alpha and beta subunits of F1 ATP synthase"/>
    <property type="match status" value="1"/>
</dbReference>
<dbReference type="SUPFAM" id="SSF52540">
    <property type="entry name" value="P-loop containing nucleoside triphosphate hydrolases"/>
    <property type="match status" value="1"/>
</dbReference>
<dbReference type="PROSITE" id="PS00152">
    <property type="entry name" value="ATPASE_ALPHA_BETA"/>
    <property type="match status" value="1"/>
</dbReference>
<name>ATPA_STAAT</name>
<organism>
    <name type="scientific">Staphylococcus aureus (strain USA300 / TCH1516)</name>
    <dbReference type="NCBI Taxonomy" id="451516"/>
    <lineage>
        <taxon>Bacteria</taxon>
        <taxon>Bacillati</taxon>
        <taxon>Bacillota</taxon>
        <taxon>Bacilli</taxon>
        <taxon>Bacillales</taxon>
        <taxon>Staphylococcaceae</taxon>
        <taxon>Staphylococcus</taxon>
    </lineage>
</organism>
<accession>A8YY72</accession>
<gene>
    <name evidence="1" type="primary">atpA</name>
    <name type="ordered locus">USA300HOU_2095</name>
</gene>
<proteinExistence type="inferred from homology"/>
<sequence>MAIKAEEISALLRSQIENYESEMSVTDVGTVLQIGDGIALIHGLNDVMAGELVEFHNGVLGLAQNLEESNVGVVILGPYTGITEGDEVKRTGRIMEVPVGEELIGRVVNPLGQPIDGQGPINTTKTRPVEKKATGVMDRKSVDEPLQTGIKAIDALVPIGRGQRELIIGDRQTGKTTIAIDTILNQKDQGTICIYVAIGQKDSTVRANVEKLRQAGALDYTIVVAASASEPSPLLYIAPYSGVTMGEEFMFNGKHVLIVYDDLTKQAAAYRELSLLLRRPPGREAYPGDVFYLHSRLLERAAKLNDDLGGGSITALPIIETQAGDISAYVPTNVISITDGQIFLQSDLFFSGVRPAINAGQSVSRVGGSAQIKAMKKVAGTLRLDLASYRELESFAQFGSDLDEFTASKLERGKRTVEVLKQDQNKPLPVEHQVLIIYALTKGYLDDIPVVDITRFEDELNHWAESNATELLNEIRETGGLPDAEKFDTAINEFKKSFSKSE</sequence>
<feature type="chain" id="PRO_1000086901" description="ATP synthase subunit alpha">
    <location>
        <begin position="1"/>
        <end position="502"/>
    </location>
</feature>
<feature type="binding site" evidence="1">
    <location>
        <begin position="169"/>
        <end position="176"/>
    </location>
    <ligand>
        <name>ATP</name>
        <dbReference type="ChEBI" id="CHEBI:30616"/>
    </ligand>
</feature>
<feature type="site" description="Required for activity" evidence="1">
    <location>
        <position position="362"/>
    </location>
</feature>
<reference key="1">
    <citation type="journal article" date="2007" name="BMC Microbiol.">
        <title>Subtle genetic changes enhance virulence of methicillin resistant and sensitive Staphylococcus aureus.</title>
        <authorList>
            <person name="Highlander S.K."/>
            <person name="Hulten K.G."/>
            <person name="Qin X."/>
            <person name="Jiang H."/>
            <person name="Yerrapragada S."/>
            <person name="Mason E.O. Jr."/>
            <person name="Shang Y."/>
            <person name="Williams T.M."/>
            <person name="Fortunov R.M."/>
            <person name="Liu Y."/>
            <person name="Igboeli O."/>
            <person name="Petrosino J."/>
            <person name="Tirumalai M."/>
            <person name="Uzman A."/>
            <person name="Fox G.E."/>
            <person name="Cardenas A.M."/>
            <person name="Muzny D.M."/>
            <person name="Hemphill L."/>
            <person name="Ding Y."/>
            <person name="Dugan S."/>
            <person name="Blyth P.R."/>
            <person name="Buhay C.J."/>
            <person name="Dinh H.H."/>
            <person name="Hawes A.C."/>
            <person name="Holder M."/>
            <person name="Kovar C.L."/>
            <person name="Lee S.L."/>
            <person name="Liu W."/>
            <person name="Nazareth L.V."/>
            <person name="Wang Q."/>
            <person name="Zhou J."/>
            <person name="Kaplan S.L."/>
            <person name="Weinstock G.M."/>
        </authorList>
    </citation>
    <scope>NUCLEOTIDE SEQUENCE [LARGE SCALE GENOMIC DNA]</scope>
    <source>
        <strain>USA300 / TCH1516</strain>
    </source>
</reference>
<comment type="function">
    <text evidence="1">Produces ATP from ADP in the presence of a proton gradient across the membrane. The alpha chain is a regulatory subunit.</text>
</comment>
<comment type="catalytic activity">
    <reaction evidence="1">
        <text>ATP + H2O + 4 H(+)(in) = ADP + phosphate + 5 H(+)(out)</text>
        <dbReference type="Rhea" id="RHEA:57720"/>
        <dbReference type="ChEBI" id="CHEBI:15377"/>
        <dbReference type="ChEBI" id="CHEBI:15378"/>
        <dbReference type="ChEBI" id="CHEBI:30616"/>
        <dbReference type="ChEBI" id="CHEBI:43474"/>
        <dbReference type="ChEBI" id="CHEBI:456216"/>
        <dbReference type="EC" id="7.1.2.2"/>
    </reaction>
</comment>
<comment type="subunit">
    <text evidence="1">F-type ATPases have 2 components, CF(1) - the catalytic core - and CF(0) - the membrane proton channel. CF(1) has five subunits: alpha(3), beta(3), gamma(1), delta(1), epsilon(1). CF(0) has three main subunits: a(1), b(2) and c(9-12). The alpha and beta chains form an alternating ring which encloses part of the gamma chain. CF(1) is attached to CF(0) by a central stalk formed by the gamma and epsilon chains, while a peripheral stalk is formed by the delta and b chains.</text>
</comment>
<comment type="subcellular location">
    <subcellularLocation>
        <location evidence="1">Cell membrane</location>
        <topology evidence="1">Peripheral membrane protein</topology>
    </subcellularLocation>
</comment>
<comment type="similarity">
    <text evidence="1">Belongs to the ATPase alpha/beta chains family.</text>
</comment>
<keyword id="KW-0066">ATP synthesis</keyword>
<keyword id="KW-0067">ATP-binding</keyword>
<keyword id="KW-1003">Cell membrane</keyword>
<keyword id="KW-0139">CF(1)</keyword>
<keyword id="KW-0375">Hydrogen ion transport</keyword>
<keyword id="KW-0406">Ion transport</keyword>
<keyword id="KW-0472">Membrane</keyword>
<keyword id="KW-0547">Nucleotide-binding</keyword>
<keyword id="KW-1278">Translocase</keyword>
<keyword id="KW-0813">Transport</keyword>
<evidence type="ECO:0000255" key="1">
    <source>
        <dbReference type="HAMAP-Rule" id="MF_01346"/>
    </source>
</evidence>